<sequence length="290" mass="32497">MRMLVSKSIFAEPEPGYYAHTPVSLVICAPNMPDLLSHRLEDGFRAASRHAEALAKLQYRDPNAKDVLGFQLAFSTTKSYWDYVEEDDPECGQRFSKAMRAVTVNKLGDVPKLYPFNKLVDDGGIIVDVGGGMGQVAQSILSHWHGLGLKCIVQDKFASKSGSTHPDLEMQSYDFFSPQPVKGSAAYLFRHIFHDWPDDACITILKNTVEAMNPHQSRILICDQIMEETNPSTAAVLYDIDMMCLYGGKERTLSEWEELLKAADQRLEIKNVFRSPNQVSGILEVQLCCD</sequence>
<accession>B8NY85</accession>
<feature type="chain" id="PRO_0000448727" description="O-methyltransferase agiB">
    <location>
        <begin position="1"/>
        <end position="290"/>
    </location>
</feature>
<feature type="active site" description="Proton acceptor" evidence="1">
    <location>
        <position position="194"/>
    </location>
</feature>
<feature type="binding site" evidence="1">
    <location>
        <position position="155"/>
    </location>
    <ligand>
        <name>S-adenosyl-L-methionine</name>
        <dbReference type="ChEBI" id="CHEBI:59789"/>
    </ligand>
</feature>
<reference key="1">
    <citation type="journal article" date="2015" name="Genome Announc.">
        <title>Genome sequence of Aspergillus flavus NRRL 3357, a strain that causes aflatoxin contamination of food and feed.</title>
        <authorList>
            <person name="Nierman W.C."/>
            <person name="Yu J."/>
            <person name="Fedorova-Abrams N.D."/>
            <person name="Losada L."/>
            <person name="Cleveland T.E."/>
            <person name="Bhatnagar D."/>
            <person name="Bennett J.W."/>
            <person name="Dean R."/>
            <person name="Payne G.A."/>
        </authorList>
    </citation>
    <scope>NUCLEOTIDE SEQUENCE [LARGE SCALE GENOMIC DNA]</scope>
    <source>
        <strain>ATCC 200026 / FGSC A1120 / IAM 13836 / NRRL 3357 / JCM 12722 / SRRC 167</strain>
    </source>
</reference>
<reference key="2">
    <citation type="journal article" date="2015" name="J. Nat. Prod.">
        <title>Isolation of a Cyclic Depsipetide, Aspergillicin F, and Synthesis of Aspergillicins with Innate Immune-Modulating Activity.</title>
        <authorList>
            <person name="Kikuchi H."/>
            <person name="Hoshikawa T."/>
            <person name="Fujimura S."/>
            <person name="Sakata N."/>
            <person name="Kurata S."/>
            <person name="Katou Y."/>
            <person name="Oshima Y."/>
        </authorList>
    </citation>
    <scope>BIOTECHNOLOGY</scope>
</reference>
<reference key="3">
    <citation type="journal article" date="2019" name="ACS Chem. Biol.">
        <title>Depsipeptide Aspergillicins Revealed by Chromatin Reader Protein Deletion.</title>
        <authorList>
            <person name="Greco C."/>
            <person name="Pfannenstiel B.T."/>
            <person name="Liu J.C."/>
            <person name="Keller N.P."/>
        </authorList>
    </citation>
    <scope>FUNCTION</scope>
    <scope>DISRUPTION PHENOTYPE</scope>
    <scope>CATALYTIC ACTIVITY</scope>
    <scope>INDUCTION</scope>
</reference>
<organism>
    <name type="scientific">Aspergillus flavus (strain ATCC 200026 / FGSC A1120 / IAM 13836 / NRRL 3357 / JCM 12722 / SRRC 167)</name>
    <dbReference type="NCBI Taxonomy" id="332952"/>
    <lineage>
        <taxon>Eukaryota</taxon>
        <taxon>Fungi</taxon>
        <taxon>Dikarya</taxon>
        <taxon>Ascomycota</taxon>
        <taxon>Pezizomycotina</taxon>
        <taxon>Eurotiomycetes</taxon>
        <taxon>Eurotiomycetidae</taxon>
        <taxon>Eurotiales</taxon>
        <taxon>Aspergillaceae</taxon>
        <taxon>Aspergillus</taxon>
        <taxon>Aspergillus subgen. Circumdati</taxon>
    </lineage>
</organism>
<proteinExistence type="evidence at protein level"/>
<gene>
    <name evidence="4" type="primary">agiB</name>
    <name type="ORF">AFLA_010550</name>
</gene>
<dbReference type="EC" id="2.1.1.-" evidence="3"/>
<dbReference type="EMBL" id="EQ963486">
    <property type="protein sequence ID" value="EED45171.1"/>
    <property type="molecule type" value="Genomic_DNA"/>
</dbReference>
<dbReference type="RefSeq" id="XP_002385300.1">
    <property type="nucleotide sequence ID" value="XM_002385259.1"/>
</dbReference>
<dbReference type="SMR" id="B8NY85"/>
<dbReference type="STRING" id="332952.B8NY85"/>
<dbReference type="EnsemblFungi" id="EED45171">
    <property type="protein sequence ID" value="EED45171"/>
    <property type="gene ID" value="AFLA_010550"/>
</dbReference>
<dbReference type="VEuPathDB" id="FungiDB:AFLA_013347"/>
<dbReference type="eggNOG" id="KOG3178">
    <property type="taxonomic scope" value="Eukaryota"/>
</dbReference>
<dbReference type="HOGENOM" id="CLU_005533_1_2_1"/>
<dbReference type="OMA" id="DIDMMCL"/>
<dbReference type="GO" id="GO:0008171">
    <property type="term" value="F:O-methyltransferase activity"/>
    <property type="evidence" value="ECO:0007669"/>
    <property type="project" value="InterPro"/>
</dbReference>
<dbReference type="GO" id="GO:0032259">
    <property type="term" value="P:methylation"/>
    <property type="evidence" value="ECO:0007669"/>
    <property type="project" value="UniProtKB-KW"/>
</dbReference>
<dbReference type="GO" id="GO:0044550">
    <property type="term" value="P:secondary metabolite biosynthetic process"/>
    <property type="evidence" value="ECO:0007669"/>
    <property type="project" value="UniProtKB-ARBA"/>
</dbReference>
<dbReference type="Gene3D" id="3.40.50.150">
    <property type="entry name" value="Vaccinia Virus protein VP39"/>
    <property type="match status" value="1"/>
</dbReference>
<dbReference type="InterPro" id="IPR016461">
    <property type="entry name" value="COMT-like"/>
</dbReference>
<dbReference type="InterPro" id="IPR001077">
    <property type="entry name" value="O_MeTrfase_dom"/>
</dbReference>
<dbReference type="InterPro" id="IPR029063">
    <property type="entry name" value="SAM-dependent_MTases_sf"/>
</dbReference>
<dbReference type="PANTHER" id="PTHR43712:SF5">
    <property type="entry name" value="O-METHYLTRANSFERASE ASQN-RELATED"/>
    <property type="match status" value="1"/>
</dbReference>
<dbReference type="PANTHER" id="PTHR43712">
    <property type="entry name" value="PUTATIVE (AFU_ORTHOLOGUE AFUA_4G14580)-RELATED"/>
    <property type="match status" value="1"/>
</dbReference>
<dbReference type="Pfam" id="PF00891">
    <property type="entry name" value="Methyltransf_2"/>
    <property type="match status" value="1"/>
</dbReference>
<dbReference type="SUPFAM" id="SSF53335">
    <property type="entry name" value="S-adenosyl-L-methionine-dependent methyltransferases"/>
    <property type="match status" value="1"/>
</dbReference>
<dbReference type="PROSITE" id="PS51683">
    <property type="entry name" value="SAM_OMT_II"/>
    <property type="match status" value="1"/>
</dbReference>
<evidence type="ECO:0000255" key="1">
    <source>
        <dbReference type="PROSITE-ProRule" id="PRU01020"/>
    </source>
</evidence>
<evidence type="ECO:0000269" key="2">
    <source>
    </source>
</evidence>
<evidence type="ECO:0000269" key="3">
    <source>
    </source>
</evidence>
<evidence type="ECO:0000303" key="4">
    <source>
    </source>
</evidence>
<evidence type="ECO:0000305" key="5"/>
<comment type="function">
    <text evidence="2 3">O-methyltransferase; part of the gene cluster that mediates the biosynthesis of the aspergillicins A and F, 2 cryptic cyclic hexa-depsipeptides (PubMed:31117395). The hexamodular NRPS agiA catalyzes the condensation of the six amino acid residues including N-Me-L-O-Me-tyrosine, L-proline 1, L-proline 2, D-isoleucine, O-acetyl-threonine, and L-isoleucine (PubMed:31117395). The starting condensation domain (C1) of agiA probably loads acetyl-CoA which is condensed on the N-terminus of threonine by the first module to yield O-acetyl-threonine (PubMed:26273902). The second module then loads L-isoleucine. The epimerase (E) domain on module 2 is probably involved in the formation of the D-isoleucine moiety (PubMed:26273902). Modules 3 and 4 further load 2 successive L-prolines (PubMed:26273902). Module 5 is then involved in the condensation of O-Me-L-tyrosine produced by the O-methyltransferase agiB and the N-methyl transferase (NMeT) domain on module 5 probably catalyzes the N-methylation to yield the N-Me-L-O-Me-tyrosine moiety (PubMed:26273902). The A domain of module 5 loads preferentially O-Me-L-tyrosine, but it can also accept L-phenylalanine, which leads to the production of aspergillicin G (PubMed:26273902). Module 6 then loads the last residue, L-isoleucine (PubMed:26273902). The C-terminal thiolesterase (TE) domain probably cyclizes the peptide using the hydroxy group from threonine to form the cyclic depsipeptide (PubMed:26273902).</text>
</comment>
<comment type="pathway">
    <text evidence="3">Secondary metabolite biosynthesis.</text>
</comment>
<comment type="disruption phenotype">
    <text evidence="3">Impairs the production of aspergillicins A and F but accumulates aspergillicins C and G.</text>
</comment>
<comment type="biotechnology">
    <text evidence="3">Aspergillicins show innate immunity-modulating activity. Innate immunity is a good pharmaceutical target for the development of immune regulators to suppress unwanted immune responses, such as septic shock, inflammatory diseases, and autoimmune diseases. The innate immune system also provides targets for the development of agents that stimulate protective immune responses toward some diseases, such as infections with pathogenic organisms and cancer.</text>
</comment>
<comment type="similarity">
    <text evidence="5">Belongs to the class I-like SAM-binding methyltransferase superfamily. Cation-independent O-methyltransferase family.</text>
</comment>
<protein>
    <recommendedName>
        <fullName evidence="4">O-methyltransferase agiB</fullName>
        <ecNumber evidence="3">2.1.1.-</ecNumber>
    </recommendedName>
    <alternativeName>
        <fullName evidence="4">Aspergillicin biosynthesis cluster protein B</fullName>
    </alternativeName>
</protein>
<keyword id="KW-0489">Methyltransferase</keyword>
<keyword id="KW-0949">S-adenosyl-L-methionine</keyword>
<keyword id="KW-0808">Transferase</keyword>
<name>AGIB_ASPFN</name>